<gene>
    <name type="primary">Gr39a</name>
    <name type="synonym">GR39D.2</name>
    <name type="ORF">CG31622</name>
</gene>
<protein>
    <recommendedName>
        <fullName>Gustatory and pheromone receptor 39a, isoform C</fullName>
    </recommendedName>
</protein>
<feature type="chain" id="PRO_0000216510" description="Gustatory and pheromone receptor 39a, isoform C">
    <location>
        <begin position="1"/>
        <end position="381"/>
    </location>
</feature>
<feature type="topological domain" description="Cytoplasmic" evidence="1">
    <location>
        <begin position="1"/>
        <end position="37"/>
    </location>
</feature>
<feature type="transmembrane region" description="Helical; Name=1" evidence="2">
    <location>
        <begin position="38"/>
        <end position="58"/>
    </location>
</feature>
<feature type="topological domain" description="Extracellular" evidence="1">
    <location>
        <begin position="59"/>
        <end position="79"/>
    </location>
</feature>
<feature type="transmembrane region" description="Helical; Name=2" evidence="2">
    <location>
        <begin position="80"/>
        <end position="100"/>
    </location>
</feature>
<feature type="topological domain" description="Cytoplasmic" evidence="1">
    <location>
        <begin position="101"/>
        <end position="129"/>
    </location>
</feature>
<feature type="transmembrane region" description="Helical; Name=3" evidence="2">
    <location>
        <begin position="130"/>
        <end position="150"/>
    </location>
</feature>
<feature type="topological domain" description="Extracellular" evidence="1">
    <location>
        <begin position="151"/>
        <end position="171"/>
    </location>
</feature>
<feature type="transmembrane region" description="Helical; Name=4" evidence="2">
    <location>
        <begin position="172"/>
        <end position="192"/>
    </location>
</feature>
<feature type="topological domain" description="Cytoplasmic" evidence="1">
    <location>
        <begin position="193"/>
        <end position="239"/>
    </location>
</feature>
<feature type="transmembrane region" description="Helical; Name=5" evidence="2">
    <location>
        <begin position="240"/>
        <end position="260"/>
    </location>
</feature>
<feature type="topological domain" description="Extracellular" evidence="1">
    <location>
        <begin position="261"/>
        <end position="271"/>
    </location>
</feature>
<feature type="transmembrane region" description="Helical; Name=6" evidence="2">
    <location>
        <begin position="272"/>
        <end position="292"/>
    </location>
</feature>
<feature type="topological domain" description="Cytoplasmic" evidence="1">
    <location>
        <begin position="293"/>
        <end position="350"/>
    </location>
</feature>
<feature type="transmembrane region" description="Helical; Name=7" evidence="2">
    <location>
        <begin position="351"/>
        <end position="371"/>
    </location>
</feature>
<feature type="topological domain" description="Extracellular" evidence="1">
    <location>
        <begin position="372"/>
        <end position="381"/>
    </location>
</feature>
<feature type="glycosylation site" description="N-linked (GlcNAc...) asparagine" evidence="2">
    <location>
        <position position="373"/>
    </location>
</feature>
<sequence>MDFQPGELCAYYRLCRYLGIFCIDYNPTKKKFRLRRSVLCYIVHFALQAYLVGCISVMVTYWRRCFKSELTTTGNHFDRLVMVIALGILVVQNAWLIWLQAPHLRIVRQIEFYRRNHLANVRLLLPKRLLWLIIATNVVYMANFIKTCIFEWLTDASRLFVITSLGFPLRYLVTSFTMGTYFCMVHIVRLVLDWNQSQINAIIDESADLKMTSPNRLRLRVCLEMHDRLMLLCNDEISLVYGFIAWLSWMFASLDVTGVIYLTMVIQTKKSIVLKLITNVVWLSPTFMTCAASFMSNRVTIQANKTAKMLTKVPRTGTGLDRMIEKFLLKNLRQKPILTAYGFFALDKSTLFKLFTAIFTYMVILVQFKEMENSTKSINKF</sequence>
<proteinExistence type="evidence at transcript level"/>
<comment type="function">
    <text evidence="4">Gustatory receptor which mediates acceptance or avoidance behavior, depending on its substrates. Plays a role in sustaining courtship behavior in males, possibly through the reception of a stimulating arrestant pheromone.</text>
</comment>
<comment type="subcellular location">
    <subcellularLocation>
        <location evidence="1">Cell membrane</location>
        <topology evidence="1">Multi-pass membrane protein</topology>
    </subcellularLocation>
</comment>
<comment type="alternative products">
    <event type="alternative splicing"/>
    <isoform>
        <id>P58957-1</id>
        <name>C</name>
        <sequence type="displayed"/>
    </isoform>
    <isoform>
        <id>P58956-1</id>
        <name>B</name>
        <sequence type="external"/>
    </isoform>
    <isoform>
        <id>P58958-1</id>
        <name>D</name>
        <sequence type="external"/>
    </isoform>
    <isoform>
        <id>P58959-1</id>
        <name>A</name>
        <sequence type="external"/>
    </isoform>
</comment>
<comment type="tissue specificity">
    <text evidence="3 5">Expressed in the adult labellar chemosensory neurons. In larvae, is expressed in neurons of the terminal external chemosensory organ, as well as in the dorsal pharyngeal sense organ.</text>
</comment>
<comment type="disruption phenotype">
    <text evidence="4">Leads to reduced courtship levels toward females.</text>
</comment>
<comment type="similarity">
    <text evidence="6">Belongs to the insect chemoreceptor superfamily. Gustatory receptor (GR) family. Gr21a subfamily.</text>
</comment>
<reference key="1">
    <citation type="journal article" date="2000" name="Science">
        <title>The genome sequence of Drosophila melanogaster.</title>
        <authorList>
            <person name="Adams M.D."/>
            <person name="Celniker S.E."/>
            <person name="Holt R.A."/>
            <person name="Evans C.A."/>
            <person name="Gocayne J.D."/>
            <person name="Amanatides P.G."/>
            <person name="Scherer S.E."/>
            <person name="Li P.W."/>
            <person name="Hoskins R.A."/>
            <person name="Galle R.F."/>
            <person name="George R.A."/>
            <person name="Lewis S.E."/>
            <person name="Richards S."/>
            <person name="Ashburner M."/>
            <person name="Henderson S.N."/>
            <person name="Sutton G.G."/>
            <person name="Wortman J.R."/>
            <person name="Yandell M.D."/>
            <person name="Zhang Q."/>
            <person name="Chen L.X."/>
            <person name="Brandon R.C."/>
            <person name="Rogers Y.-H.C."/>
            <person name="Blazej R.G."/>
            <person name="Champe M."/>
            <person name="Pfeiffer B.D."/>
            <person name="Wan K.H."/>
            <person name="Doyle C."/>
            <person name="Baxter E.G."/>
            <person name="Helt G."/>
            <person name="Nelson C.R."/>
            <person name="Miklos G.L.G."/>
            <person name="Abril J.F."/>
            <person name="Agbayani A."/>
            <person name="An H.-J."/>
            <person name="Andrews-Pfannkoch C."/>
            <person name="Baldwin D."/>
            <person name="Ballew R.M."/>
            <person name="Basu A."/>
            <person name="Baxendale J."/>
            <person name="Bayraktaroglu L."/>
            <person name="Beasley E.M."/>
            <person name="Beeson K.Y."/>
            <person name="Benos P.V."/>
            <person name="Berman B.P."/>
            <person name="Bhandari D."/>
            <person name="Bolshakov S."/>
            <person name="Borkova D."/>
            <person name="Botchan M.R."/>
            <person name="Bouck J."/>
            <person name="Brokstein P."/>
            <person name="Brottier P."/>
            <person name="Burtis K.C."/>
            <person name="Busam D.A."/>
            <person name="Butler H."/>
            <person name="Cadieu E."/>
            <person name="Center A."/>
            <person name="Chandra I."/>
            <person name="Cherry J.M."/>
            <person name="Cawley S."/>
            <person name="Dahlke C."/>
            <person name="Davenport L.B."/>
            <person name="Davies P."/>
            <person name="de Pablos B."/>
            <person name="Delcher A."/>
            <person name="Deng Z."/>
            <person name="Mays A.D."/>
            <person name="Dew I."/>
            <person name="Dietz S.M."/>
            <person name="Dodson K."/>
            <person name="Doup L.E."/>
            <person name="Downes M."/>
            <person name="Dugan-Rocha S."/>
            <person name="Dunkov B.C."/>
            <person name="Dunn P."/>
            <person name="Durbin K.J."/>
            <person name="Evangelista C.C."/>
            <person name="Ferraz C."/>
            <person name="Ferriera S."/>
            <person name="Fleischmann W."/>
            <person name="Fosler C."/>
            <person name="Gabrielian A.E."/>
            <person name="Garg N.S."/>
            <person name="Gelbart W.M."/>
            <person name="Glasser K."/>
            <person name="Glodek A."/>
            <person name="Gong F."/>
            <person name="Gorrell J.H."/>
            <person name="Gu Z."/>
            <person name="Guan P."/>
            <person name="Harris M."/>
            <person name="Harris N.L."/>
            <person name="Harvey D.A."/>
            <person name="Heiman T.J."/>
            <person name="Hernandez J.R."/>
            <person name="Houck J."/>
            <person name="Hostin D."/>
            <person name="Houston K.A."/>
            <person name="Howland T.J."/>
            <person name="Wei M.-H."/>
            <person name="Ibegwam C."/>
            <person name="Jalali M."/>
            <person name="Kalush F."/>
            <person name="Karpen G.H."/>
            <person name="Ke Z."/>
            <person name="Kennison J.A."/>
            <person name="Ketchum K.A."/>
            <person name="Kimmel B.E."/>
            <person name="Kodira C.D."/>
            <person name="Kraft C.L."/>
            <person name="Kravitz S."/>
            <person name="Kulp D."/>
            <person name="Lai Z."/>
            <person name="Lasko P."/>
            <person name="Lei Y."/>
            <person name="Levitsky A.A."/>
            <person name="Li J.H."/>
            <person name="Li Z."/>
            <person name="Liang Y."/>
            <person name="Lin X."/>
            <person name="Liu X."/>
            <person name="Mattei B."/>
            <person name="McIntosh T.C."/>
            <person name="McLeod M.P."/>
            <person name="McPherson D."/>
            <person name="Merkulov G."/>
            <person name="Milshina N.V."/>
            <person name="Mobarry C."/>
            <person name="Morris J."/>
            <person name="Moshrefi A."/>
            <person name="Mount S.M."/>
            <person name="Moy M."/>
            <person name="Murphy B."/>
            <person name="Murphy L."/>
            <person name="Muzny D.M."/>
            <person name="Nelson D.L."/>
            <person name="Nelson D.R."/>
            <person name="Nelson K.A."/>
            <person name="Nixon K."/>
            <person name="Nusskern D.R."/>
            <person name="Pacleb J.M."/>
            <person name="Palazzolo M."/>
            <person name="Pittman G.S."/>
            <person name="Pan S."/>
            <person name="Pollard J."/>
            <person name="Puri V."/>
            <person name="Reese M.G."/>
            <person name="Reinert K."/>
            <person name="Remington K."/>
            <person name="Saunders R.D.C."/>
            <person name="Scheeler F."/>
            <person name="Shen H."/>
            <person name="Shue B.C."/>
            <person name="Siden-Kiamos I."/>
            <person name="Simpson M."/>
            <person name="Skupski M.P."/>
            <person name="Smith T.J."/>
            <person name="Spier E."/>
            <person name="Spradling A.C."/>
            <person name="Stapleton M."/>
            <person name="Strong R."/>
            <person name="Sun E."/>
            <person name="Svirskas R."/>
            <person name="Tector C."/>
            <person name="Turner R."/>
            <person name="Venter E."/>
            <person name="Wang A.H."/>
            <person name="Wang X."/>
            <person name="Wang Z.-Y."/>
            <person name="Wassarman D.A."/>
            <person name="Weinstock G.M."/>
            <person name="Weissenbach J."/>
            <person name="Williams S.M."/>
            <person name="Woodage T."/>
            <person name="Worley K.C."/>
            <person name="Wu D."/>
            <person name="Yang S."/>
            <person name="Yao Q.A."/>
            <person name="Ye J."/>
            <person name="Yeh R.-F."/>
            <person name="Zaveri J.S."/>
            <person name="Zhan M."/>
            <person name="Zhang G."/>
            <person name="Zhao Q."/>
            <person name="Zheng L."/>
            <person name="Zheng X.H."/>
            <person name="Zhong F.N."/>
            <person name="Zhong W."/>
            <person name="Zhou X."/>
            <person name="Zhu S.C."/>
            <person name="Zhu X."/>
            <person name="Smith H.O."/>
            <person name="Gibbs R.A."/>
            <person name="Myers E.W."/>
            <person name="Rubin G.M."/>
            <person name="Venter J.C."/>
        </authorList>
    </citation>
    <scope>NUCLEOTIDE SEQUENCE [LARGE SCALE GENOMIC DNA]</scope>
    <source>
        <strain>Berkeley</strain>
    </source>
</reference>
<reference key="2">
    <citation type="journal article" date="2002" name="Genome Biol.">
        <title>Annotation of the Drosophila melanogaster euchromatic genome: a systematic review.</title>
        <authorList>
            <person name="Misra S."/>
            <person name="Crosby M.A."/>
            <person name="Mungall C.J."/>
            <person name="Matthews B.B."/>
            <person name="Campbell K.S."/>
            <person name="Hradecky P."/>
            <person name="Huang Y."/>
            <person name="Kaminker J.S."/>
            <person name="Millburn G.H."/>
            <person name="Prochnik S.E."/>
            <person name="Smith C.D."/>
            <person name="Tupy J.L."/>
            <person name="Whitfield E.J."/>
            <person name="Bayraktaroglu L."/>
            <person name="Berman B.P."/>
            <person name="Bettencourt B.R."/>
            <person name="Celniker S.E."/>
            <person name="de Grey A.D.N.J."/>
            <person name="Drysdale R.A."/>
            <person name="Harris N.L."/>
            <person name="Richter J."/>
            <person name="Russo S."/>
            <person name="Schroeder A.J."/>
            <person name="Shu S.Q."/>
            <person name="Stapleton M."/>
            <person name="Yamada C."/>
            <person name="Ashburner M."/>
            <person name="Gelbart W.M."/>
            <person name="Rubin G.M."/>
            <person name="Lewis S.E."/>
        </authorList>
    </citation>
    <scope>GENOME REANNOTATION</scope>
    <source>
        <strain>Berkeley</strain>
    </source>
</reference>
<reference key="3">
    <citation type="journal article" date="2000" name="Science">
        <title>Candidate taste receptors in Drosophila.</title>
        <authorList>
            <person name="Clyne P.J."/>
            <person name="Warr C.G."/>
            <person name="Carlson J.R."/>
        </authorList>
    </citation>
    <scope>IDENTIFICATION</scope>
    <scope>TISSUE SPECIFICITY</scope>
</reference>
<reference key="4">
    <citation type="journal article" date="2001" name="Curr. Biol.">
        <title>Spatially restricted expression of candidate taste receptors in the Drosophila gustatory system.</title>
        <authorList>
            <person name="Dunipace L."/>
            <person name="Meister S."/>
            <person name="McNealy C."/>
            <person name="Amrein H."/>
        </authorList>
    </citation>
    <scope>IDENTIFICATION</scope>
</reference>
<reference key="5">
    <citation type="journal article" date="2011" name="Behav. Genet.">
        <title>Gr39a, a highly diversified gustatory receptor in Drosophila, has a role in sexual behavior.</title>
        <authorList>
            <person name="Watanabe K."/>
            <person name="Toba G."/>
            <person name="Koganezawa M."/>
            <person name="Yamamoto D."/>
        </authorList>
    </citation>
    <scope>FUNCTION</scope>
    <scope>DISRUPTION PHENOTYPE</scope>
</reference>
<reference key="6">
    <citation type="journal article" date="2011" name="J. Neurosci.">
        <title>Molecular and cellular organization of the taste system in the Drosophila larva.</title>
        <authorList>
            <person name="Kwon J.Y."/>
            <person name="Dahanukar A."/>
            <person name="Weiss L.A."/>
            <person name="Carlson J.R."/>
        </authorList>
    </citation>
    <scope>TISSUE SPECIFICITY</scope>
</reference>
<evidence type="ECO:0000250" key="1"/>
<evidence type="ECO:0000255" key="2"/>
<evidence type="ECO:0000269" key="3">
    <source>
    </source>
</evidence>
<evidence type="ECO:0000269" key="4">
    <source>
    </source>
</evidence>
<evidence type="ECO:0000269" key="5">
    <source>
    </source>
</evidence>
<evidence type="ECO:0000305" key="6"/>
<organism>
    <name type="scientific">Drosophila melanogaster</name>
    <name type="common">Fruit fly</name>
    <dbReference type="NCBI Taxonomy" id="7227"/>
    <lineage>
        <taxon>Eukaryota</taxon>
        <taxon>Metazoa</taxon>
        <taxon>Ecdysozoa</taxon>
        <taxon>Arthropoda</taxon>
        <taxon>Hexapoda</taxon>
        <taxon>Insecta</taxon>
        <taxon>Pterygota</taxon>
        <taxon>Neoptera</taxon>
        <taxon>Endopterygota</taxon>
        <taxon>Diptera</taxon>
        <taxon>Brachycera</taxon>
        <taxon>Muscomorpha</taxon>
        <taxon>Ephydroidea</taxon>
        <taxon>Drosophilidae</taxon>
        <taxon>Drosophila</taxon>
        <taxon>Sophophora</taxon>
    </lineage>
</organism>
<name>G39AB_DROME</name>
<dbReference type="EMBL" id="AE014134">
    <property type="protein sequence ID" value="AAN11115.1"/>
    <property type="molecule type" value="Genomic_DNA"/>
</dbReference>
<dbReference type="RefSeq" id="NP_724330.1">
    <molecule id="P58957-1"/>
    <property type="nucleotide sequence ID" value="NM_165371.1"/>
</dbReference>
<dbReference type="SMR" id="P58957"/>
<dbReference type="FunCoup" id="P58957">
    <property type="interactions" value="102"/>
</dbReference>
<dbReference type="IntAct" id="P58957">
    <property type="interactions" value="12"/>
</dbReference>
<dbReference type="STRING" id="7227.FBpp0081037"/>
<dbReference type="GlyCosmos" id="P58957">
    <property type="glycosylation" value="1 site, No reported glycans"/>
</dbReference>
<dbReference type="GlyGen" id="P58957">
    <property type="glycosylation" value="1 site"/>
</dbReference>
<dbReference type="PaxDb" id="7227-FBpp0081037"/>
<dbReference type="EnsemblMetazoa" id="FBtr0081509">
    <molecule id="P58957-1"/>
    <property type="protein sequence ID" value="FBpp0081037"/>
    <property type="gene ID" value="FBgn0264556"/>
</dbReference>
<dbReference type="GeneID" id="117346"/>
<dbReference type="AGR" id="FB:FBgn0264556"/>
<dbReference type="CTD" id="117346"/>
<dbReference type="FlyBase" id="FBgn0264556">
    <property type="gene designation" value="Gr39a"/>
</dbReference>
<dbReference type="VEuPathDB" id="VectorBase:FBgn0264556"/>
<dbReference type="eggNOG" id="ENOG502T8ZS">
    <property type="taxonomic scope" value="Eukaryota"/>
</dbReference>
<dbReference type="GeneTree" id="ENSGT00940000166130"/>
<dbReference type="HOGENOM" id="CLU_744470_0_0_1"/>
<dbReference type="InParanoid" id="P58957"/>
<dbReference type="OrthoDB" id="6748730at2759"/>
<dbReference type="PhylomeDB" id="P58957"/>
<dbReference type="BioGRID-ORCS" id="117346">
    <property type="hits" value="0 hits in 1 CRISPR screen"/>
</dbReference>
<dbReference type="GenomeRNAi" id="117346"/>
<dbReference type="Proteomes" id="UP000000803">
    <property type="component" value="Chromosome 2L"/>
</dbReference>
<dbReference type="Bgee" id="FBgn0264556">
    <property type="expression patterns" value="Expressed in adult Malpighian tubule principal cell of lower segment in Malpighian tubule and 39 other cell types or tissues"/>
</dbReference>
<dbReference type="ExpressionAtlas" id="P58957">
    <property type="expression patterns" value="baseline and differential"/>
</dbReference>
<dbReference type="GO" id="GO:0030424">
    <property type="term" value="C:axon"/>
    <property type="evidence" value="ECO:0000318"/>
    <property type="project" value="GO_Central"/>
</dbReference>
<dbReference type="GO" id="GO:0030425">
    <property type="term" value="C:dendrite"/>
    <property type="evidence" value="ECO:0000318"/>
    <property type="project" value="GO_Central"/>
</dbReference>
<dbReference type="GO" id="GO:0016020">
    <property type="term" value="C:membrane"/>
    <property type="evidence" value="ECO:0000303"/>
    <property type="project" value="UniProtKB"/>
</dbReference>
<dbReference type="GO" id="GO:0043025">
    <property type="term" value="C:neuronal cell body"/>
    <property type="evidence" value="ECO:0000318"/>
    <property type="project" value="GO_Central"/>
</dbReference>
<dbReference type="GO" id="GO:0005886">
    <property type="term" value="C:plasma membrane"/>
    <property type="evidence" value="ECO:0000250"/>
    <property type="project" value="FlyBase"/>
</dbReference>
<dbReference type="GO" id="GO:0015276">
    <property type="term" value="F:ligand-gated monoatomic ion channel activity"/>
    <property type="evidence" value="ECO:0000250"/>
    <property type="project" value="FlyBase"/>
</dbReference>
<dbReference type="GO" id="GO:0008527">
    <property type="term" value="F:taste receptor activity"/>
    <property type="evidence" value="ECO:0000303"/>
    <property type="project" value="UniProtKB"/>
</dbReference>
<dbReference type="GO" id="GO:0007635">
    <property type="term" value="P:chemosensory behavior"/>
    <property type="evidence" value="ECO:0000318"/>
    <property type="project" value="GO_Central"/>
</dbReference>
<dbReference type="GO" id="GO:0008049">
    <property type="term" value="P:male courtship behavior"/>
    <property type="evidence" value="ECO:0000315"/>
    <property type="project" value="FlyBase"/>
</dbReference>
<dbReference type="GO" id="GO:0034220">
    <property type="term" value="P:monoatomic ion transmembrane transport"/>
    <property type="evidence" value="ECO:0000250"/>
    <property type="project" value="FlyBase"/>
</dbReference>
<dbReference type="GO" id="GO:0050909">
    <property type="term" value="P:sensory perception of taste"/>
    <property type="evidence" value="ECO:0000303"/>
    <property type="project" value="UniProtKB"/>
</dbReference>
<dbReference type="GO" id="GO:0007165">
    <property type="term" value="P:signal transduction"/>
    <property type="evidence" value="ECO:0007669"/>
    <property type="project" value="UniProtKB-KW"/>
</dbReference>
<dbReference type="InterPro" id="IPR013604">
    <property type="entry name" value="7TM_chemorcpt"/>
</dbReference>
<dbReference type="PANTHER" id="PTHR21143:SF133">
    <property type="entry name" value="GUSTATORY AND PHEROMONE RECEPTOR 32A-RELATED"/>
    <property type="match status" value="1"/>
</dbReference>
<dbReference type="PANTHER" id="PTHR21143">
    <property type="entry name" value="INVERTEBRATE GUSTATORY RECEPTOR"/>
    <property type="match status" value="1"/>
</dbReference>
<dbReference type="Pfam" id="PF08395">
    <property type="entry name" value="7tm_7"/>
    <property type="match status" value="1"/>
</dbReference>
<accession>P58957</accession>
<keyword id="KW-0025">Alternative splicing</keyword>
<keyword id="KW-1003">Cell membrane</keyword>
<keyword id="KW-0325">Glycoprotein</keyword>
<keyword id="KW-0472">Membrane</keyword>
<keyword id="KW-0675">Receptor</keyword>
<keyword id="KW-1185">Reference proteome</keyword>
<keyword id="KW-0807">Transducer</keyword>
<keyword id="KW-0812">Transmembrane</keyword>
<keyword id="KW-1133">Transmembrane helix</keyword>